<reference key="1">
    <citation type="submission" date="2005-09" db="EMBL/GenBank/DDBJ databases">
        <title>Complete sequence of chromosome 1 of Rhodobacter sphaeroides 2.4.1.</title>
        <authorList>
            <person name="Copeland A."/>
            <person name="Lucas S."/>
            <person name="Lapidus A."/>
            <person name="Barry K."/>
            <person name="Detter J.C."/>
            <person name="Glavina T."/>
            <person name="Hammon N."/>
            <person name="Israni S."/>
            <person name="Pitluck S."/>
            <person name="Richardson P."/>
            <person name="Mackenzie C."/>
            <person name="Choudhary M."/>
            <person name="Larimer F."/>
            <person name="Hauser L.J."/>
            <person name="Land M."/>
            <person name="Donohue T.J."/>
            <person name="Kaplan S."/>
        </authorList>
    </citation>
    <scope>NUCLEOTIDE SEQUENCE [LARGE SCALE GENOMIC DNA]</scope>
    <source>
        <strain>ATCC 17023 / DSM 158 / JCM 6121 / CCUG 31486 / LMG 2827 / NBRC 12203 / NCIMB 8253 / ATH 2.4.1.</strain>
    </source>
</reference>
<name>RPOA_CERS4</name>
<feature type="chain" id="PRO_0000225297" description="DNA-directed RNA polymerase subunit alpha">
    <location>
        <begin position="1"/>
        <end position="338"/>
    </location>
</feature>
<feature type="region of interest" description="Alpha N-terminal domain (alpha-NTD)" evidence="1">
    <location>
        <begin position="1"/>
        <end position="234"/>
    </location>
</feature>
<feature type="region of interest" description="Alpha C-terminal domain (alpha-CTD)" evidence="1">
    <location>
        <begin position="250"/>
        <end position="338"/>
    </location>
</feature>
<proteinExistence type="inferred from homology"/>
<comment type="function">
    <text evidence="1">DNA-dependent RNA polymerase catalyzes the transcription of DNA into RNA using the four ribonucleoside triphosphates as substrates.</text>
</comment>
<comment type="catalytic activity">
    <reaction evidence="1">
        <text>RNA(n) + a ribonucleoside 5'-triphosphate = RNA(n+1) + diphosphate</text>
        <dbReference type="Rhea" id="RHEA:21248"/>
        <dbReference type="Rhea" id="RHEA-COMP:14527"/>
        <dbReference type="Rhea" id="RHEA-COMP:17342"/>
        <dbReference type="ChEBI" id="CHEBI:33019"/>
        <dbReference type="ChEBI" id="CHEBI:61557"/>
        <dbReference type="ChEBI" id="CHEBI:140395"/>
        <dbReference type="EC" id="2.7.7.6"/>
    </reaction>
</comment>
<comment type="subunit">
    <text evidence="1">Homodimer. The RNAP catalytic core consists of 2 alpha, 1 beta, 1 beta' and 1 omega subunit. When a sigma factor is associated with the core the holoenzyme is formed, which can initiate transcription.</text>
</comment>
<comment type="domain">
    <text evidence="1">The N-terminal domain is essential for RNAP assembly and basal transcription, whereas the C-terminal domain is involved in interaction with transcriptional regulators and with upstream promoter elements.</text>
</comment>
<comment type="similarity">
    <text evidence="1">Belongs to the RNA polymerase alpha chain family.</text>
</comment>
<accession>Q3J5P8</accession>
<keyword id="KW-0240">DNA-directed RNA polymerase</keyword>
<keyword id="KW-0548">Nucleotidyltransferase</keyword>
<keyword id="KW-1185">Reference proteome</keyword>
<keyword id="KW-0804">Transcription</keyword>
<keyword id="KW-0808">Transferase</keyword>
<dbReference type="EC" id="2.7.7.6" evidence="1"/>
<dbReference type="EMBL" id="CP000143">
    <property type="protein sequence ID" value="ABA77886.1"/>
    <property type="molecule type" value="Genomic_DNA"/>
</dbReference>
<dbReference type="RefSeq" id="WP_002722536.1">
    <property type="nucleotide sequence ID" value="NZ_CP030271.1"/>
</dbReference>
<dbReference type="RefSeq" id="YP_351787.1">
    <property type="nucleotide sequence ID" value="NC_007493.2"/>
</dbReference>
<dbReference type="SMR" id="Q3J5P8"/>
<dbReference type="STRING" id="272943.RSP_1739"/>
<dbReference type="EnsemblBacteria" id="ABA77886">
    <property type="protein sequence ID" value="ABA77886"/>
    <property type="gene ID" value="RSP_1739"/>
</dbReference>
<dbReference type="KEGG" id="rsp:RSP_1739"/>
<dbReference type="PATRIC" id="fig|272943.9.peg.617"/>
<dbReference type="eggNOG" id="COG0202">
    <property type="taxonomic scope" value="Bacteria"/>
</dbReference>
<dbReference type="OrthoDB" id="9805706at2"/>
<dbReference type="PhylomeDB" id="Q3J5P8"/>
<dbReference type="Proteomes" id="UP000002703">
    <property type="component" value="Chromosome 1"/>
</dbReference>
<dbReference type="GO" id="GO:0005737">
    <property type="term" value="C:cytoplasm"/>
    <property type="evidence" value="ECO:0007669"/>
    <property type="project" value="UniProtKB-ARBA"/>
</dbReference>
<dbReference type="GO" id="GO:0000428">
    <property type="term" value="C:DNA-directed RNA polymerase complex"/>
    <property type="evidence" value="ECO:0007669"/>
    <property type="project" value="UniProtKB-KW"/>
</dbReference>
<dbReference type="GO" id="GO:0003677">
    <property type="term" value="F:DNA binding"/>
    <property type="evidence" value="ECO:0007669"/>
    <property type="project" value="UniProtKB-UniRule"/>
</dbReference>
<dbReference type="GO" id="GO:0003899">
    <property type="term" value="F:DNA-directed RNA polymerase activity"/>
    <property type="evidence" value="ECO:0007669"/>
    <property type="project" value="UniProtKB-UniRule"/>
</dbReference>
<dbReference type="GO" id="GO:0046983">
    <property type="term" value="F:protein dimerization activity"/>
    <property type="evidence" value="ECO:0007669"/>
    <property type="project" value="InterPro"/>
</dbReference>
<dbReference type="GO" id="GO:0006351">
    <property type="term" value="P:DNA-templated transcription"/>
    <property type="evidence" value="ECO:0007669"/>
    <property type="project" value="UniProtKB-UniRule"/>
</dbReference>
<dbReference type="CDD" id="cd06928">
    <property type="entry name" value="RNAP_alpha_NTD"/>
    <property type="match status" value="1"/>
</dbReference>
<dbReference type="FunFam" id="1.10.150.20:FF:000001">
    <property type="entry name" value="DNA-directed RNA polymerase subunit alpha"/>
    <property type="match status" value="1"/>
</dbReference>
<dbReference type="FunFam" id="2.170.120.12:FF:000001">
    <property type="entry name" value="DNA-directed RNA polymerase subunit alpha"/>
    <property type="match status" value="1"/>
</dbReference>
<dbReference type="Gene3D" id="1.10.150.20">
    <property type="entry name" value="5' to 3' exonuclease, C-terminal subdomain"/>
    <property type="match status" value="1"/>
</dbReference>
<dbReference type="Gene3D" id="2.170.120.12">
    <property type="entry name" value="DNA-directed RNA polymerase, insert domain"/>
    <property type="match status" value="1"/>
</dbReference>
<dbReference type="Gene3D" id="3.30.1360.10">
    <property type="entry name" value="RNA polymerase, RBP11-like subunit"/>
    <property type="match status" value="1"/>
</dbReference>
<dbReference type="HAMAP" id="MF_00059">
    <property type="entry name" value="RNApol_bact_RpoA"/>
    <property type="match status" value="1"/>
</dbReference>
<dbReference type="InterPro" id="IPR011262">
    <property type="entry name" value="DNA-dir_RNA_pol_insert"/>
</dbReference>
<dbReference type="InterPro" id="IPR011263">
    <property type="entry name" value="DNA-dir_RNA_pol_RpoA/D/Rpb3"/>
</dbReference>
<dbReference type="InterPro" id="IPR011773">
    <property type="entry name" value="DNA-dir_RpoA"/>
</dbReference>
<dbReference type="InterPro" id="IPR036603">
    <property type="entry name" value="RBP11-like"/>
</dbReference>
<dbReference type="InterPro" id="IPR011260">
    <property type="entry name" value="RNAP_asu_C"/>
</dbReference>
<dbReference type="InterPro" id="IPR036643">
    <property type="entry name" value="RNApol_insert_sf"/>
</dbReference>
<dbReference type="NCBIfam" id="NF003513">
    <property type="entry name" value="PRK05182.1-2"/>
    <property type="match status" value="1"/>
</dbReference>
<dbReference type="NCBIfam" id="NF003519">
    <property type="entry name" value="PRK05182.2-5"/>
    <property type="match status" value="1"/>
</dbReference>
<dbReference type="NCBIfam" id="TIGR02027">
    <property type="entry name" value="rpoA"/>
    <property type="match status" value="1"/>
</dbReference>
<dbReference type="Pfam" id="PF01000">
    <property type="entry name" value="RNA_pol_A_bac"/>
    <property type="match status" value="1"/>
</dbReference>
<dbReference type="Pfam" id="PF03118">
    <property type="entry name" value="RNA_pol_A_CTD"/>
    <property type="match status" value="1"/>
</dbReference>
<dbReference type="Pfam" id="PF01193">
    <property type="entry name" value="RNA_pol_L"/>
    <property type="match status" value="1"/>
</dbReference>
<dbReference type="SMART" id="SM00662">
    <property type="entry name" value="RPOLD"/>
    <property type="match status" value="1"/>
</dbReference>
<dbReference type="SUPFAM" id="SSF47789">
    <property type="entry name" value="C-terminal domain of RNA polymerase alpha subunit"/>
    <property type="match status" value="1"/>
</dbReference>
<dbReference type="SUPFAM" id="SSF56553">
    <property type="entry name" value="Insert subdomain of RNA polymerase alpha subunit"/>
    <property type="match status" value="1"/>
</dbReference>
<dbReference type="SUPFAM" id="SSF55257">
    <property type="entry name" value="RBP11-like subunits of RNA polymerase"/>
    <property type="match status" value="1"/>
</dbReference>
<organism>
    <name type="scientific">Cereibacter sphaeroides (strain ATCC 17023 / DSM 158 / JCM 6121 / CCUG 31486 / LMG 2827 / NBRC 12203 / NCIMB 8253 / ATH 2.4.1.)</name>
    <name type="common">Rhodobacter sphaeroides</name>
    <dbReference type="NCBI Taxonomy" id="272943"/>
    <lineage>
        <taxon>Bacteria</taxon>
        <taxon>Pseudomonadati</taxon>
        <taxon>Pseudomonadota</taxon>
        <taxon>Alphaproteobacteria</taxon>
        <taxon>Rhodobacterales</taxon>
        <taxon>Paracoccaceae</taxon>
        <taxon>Cereibacter</taxon>
    </lineage>
</organism>
<sequence length="338" mass="37095">MIHKNWAELIKPTQLVVKPGADPARVATVIAEPLERGFGLTLGNALRRVLLSSLQGAAITSVQIDNVLHEFSSVAGVREDVTDIVLNLKGVSIKMEVEGPKRLSISAKGPGVVTAGDISESNGIEILNKDHVICHLDEGADVFMELTVNTGKGYVAADKNRPEDAPIGLIPIDAIYSPVKKVSYEVTPTREGQVLDYDKLTMRIETDGGLTPDDAVAYAARILQDQLSIFVNFEEPESATRHDVEDGLEFNPLLLKKVDELELSVRSANCLKNDNIVYIGDLIQKTEAEMLRTPNFGRKSLNEIKEVLSGMGLHLGMDVEDWPPENIEDLAKRFEDQF</sequence>
<protein>
    <recommendedName>
        <fullName evidence="1">DNA-directed RNA polymerase subunit alpha</fullName>
        <shortName evidence="1">RNAP subunit alpha</shortName>
        <ecNumber evidence="1">2.7.7.6</ecNumber>
    </recommendedName>
    <alternativeName>
        <fullName evidence="1">RNA polymerase subunit alpha</fullName>
    </alternativeName>
    <alternativeName>
        <fullName evidence="1">Transcriptase subunit alpha</fullName>
    </alternativeName>
</protein>
<gene>
    <name evidence="1" type="primary">rpoA</name>
    <name type="ordered locus">RHOS4_03180</name>
    <name type="ORF">RSP_1739</name>
</gene>
<evidence type="ECO:0000255" key="1">
    <source>
        <dbReference type="HAMAP-Rule" id="MF_00059"/>
    </source>
</evidence>